<protein>
    <recommendedName>
        <fullName evidence="1">Heat-inducible transcription repressor HrcA</fullName>
    </recommendedName>
</protein>
<evidence type="ECO:0000255" key="1">
    <source>
        <dbReference type="HAMAP-Rule" id="MF_00081"/>
    </source>
</evidence>
<name>HRCA_STRPI</name>
<gene>
    <name evidence="1" type="primary">hrcA</name>
    <name type="ordered locus">SPH_0622</name>
</gene>
<proteinExistence type="inferred from homology"/>
<feature type="chain" id="PRO_1000092833" description="Heat-inducible transcription repressor HrcA">
    <location>
        <begin position="1"/>
        <end position="344"/>
    </location>
</feature>
<organism>
    <name type="scientific">Streptococcus pneumoniae (strain Hungary19A-6)</name>
    <dbReference type="NCBI Taxonomy" id="487214"/>
    <lineage>
        <taxon>Bacteria</taxon>
        <taxon>Bacillati</taxon>
        <taxon>Bacillota</taxon>
        <taxon>Bacilli</taxon>
        <taxon>Lactobacillales</taxon>
        <taxon>Streptococcaceae</taxon>
        <taxon>Streptococcus</taxon>
    </lineage>
</organism>
<reference key="1">
    <citation type="journal article" date="2010" name="Genome Biol.">
        <title>Structure and dynamics of the pan-genome of Streptococcus pneumoniae and closely related species.</title>
        <authorList>
            <person name="Donati C."/>
            <person name="Hiller N.L."/>
            <person name="Tettelin H."/>
            <person name="Muzzi A."/>
            <person name="Croucher N.J."/>
            <person name="Angiuoli S.V."/>
            <person name="Oggioni M."/>
            <person name="Dunning Hotopp J.C."/>
            <person name="Hu F.Z."/>
            <person name="Riley D.R."/>
            <person name="Covacci A."/>
            <person name="Mitchell T.J."/>
            <person name="Bentley S.D."/>
            <person name="Kilian M."/>
            <person name="Ehrlich G.D."/>
            <person name="Rappuoli R."/>
            <person name="Moxon E.R."/>
            <person name="Masignani V."/>
        </authorList>
    </citation>
    <scope>NUCLEOTIDE SEQUENCE [LARGE SCALE GENOMIC DNA]</scope>
    <source>
        <strain>Hungary19A-6</strain>
    </source>
</reference>
<sequence>MVTERQQDILNLIIDIFTKTHEPVGSKALQESINSSSATIRNDMAELEKQGLLEKAHTSSGRMPSVAGFQYYVKHSLDFDRLAENEVYEIVKAFDQEFFKLEDILQEAANLLTDLSGCTVVALDVEPSRQRLTAFDIVVLGQHTALAVFTLDESRTVTSQFLIPRNFLQEDLLKLKSIIQERFLGHTVLDIHYKIRTEIPQIIQRYFTTTDNVIDLFEHIFKEMFNENIVMAGKVHLLNFANLAAYQFFDQPQKVALEIREGLREEQMQNVRVADGQESCLADLAVISSKFLIPYRGVGILAIIGPVNLDYQQLINQVNVVNRVLTMKLTDFYRYLSSNHYEVH</sequence>
<comment type="function">
    <text evidence="1">Negative regulator of class I heat shock genes (grpE-dnaK-dnaJ and groELS operons). Prevents heat-shock induction of these operons.</text>
</comment>
<comment type="similarity">
    <text evidence="1">Belongs to the HrcA family.</text>
</comment>
<dbReference type="EMBL" id="CP000936">
    <property type="protein sequence ID" value="ACA37580.1"/>
    <property type="molecule type" value="Genomic_DNA"/>
</dbReference>
<dbReference type="RefSeq" id="WP_000255769.1">
    <property type="nucleotide sequence ID" value="NC_010380.1"/>
</dbReference>
<dbReference type="SMR" id="B1IA50"/>
<dbReference type="KEGG" id="spv:SPH_0622"/>
<dbReference type="HOGENOM" id="CLU_050019_1_0_9"/>
<dbReference type="Proteomes" id="UP000002163">
    <property type="component" value="Chromosome"/>
</dbReference>
<dbReference type="GO" id="GO:0003677">
    <property type="term" value="F:DNA binding"/>
    <property type="evidence" value="ECO:0007669"/>
    <property type="project" value="InterPro"/>
</dbReference>
<dbReference type="GO" id="GO:0045892">
    <property type="term" value="P:negative regulation of DNA-templated transcription"/>
    <property type="evidence" value="ECO:0007669"/>
    <property type="project" value="UniProtKB-UniRule"/>
</dbReference>
<dbReference type="Gene3D" id="3.30.450.40">
    <property type="match status" value="1"/>
</dbReference>
<dbReference type="Gene3D" id="3.30.390.60">
    <property type="entry name" value="Heat-inducible transcription repressor hrca homolog, domain 3"/>
    <property type="match status" value="1"/>
</dbReference>
<dbReference type="Gene3D" id="1.10.10.10">
    <property type="entry name" value="Winged helix-like DNA-binding domain superfamily/Winged helix DNA-binding domain"/>
    <property type="match status" value="1"/>
</dbReference>
<dbReference type="HAMAP" id="MF_00081">
    <property type="entry name" value="HrcA"/>
    <property type="match status" value="1"/>
</dbReference>
<dbReference type="InterPro" id="IPR029016">
    <property type="entry name" value="GAF-like_dom_sf"/>
</dbReference>
<dbReference type="InterPro" id="IPR002571">
    <property type="entry name" value="HrcA"/>
</dbReference>
<dbReference type="InterPro" id="IPR021153">
    <property type="entry name" value="HrcA_C"/>
</dbReference>
<dbReference type="InterPro" id="IPR036388">
    <property type="entry name" value="WH-like_DNA-bd_sf"/>
</dbReference>
<dbReference type="InterPro" id="IPR036390">
    <property type="entry name" value="WH_DNA-bd_sf"/>
</dbReference>
<dbReference type="InterPro" id="IPR005104">
    <property type="entry name" value="WHTH_HrcA_DNA-bd"/>
</dbReference>
<dbReference type="InterPro" id="IPR023120">
    <property type="entry name" value="WHTH_transcript_rep_HrcA_IDD"/>
</dbReference>
<dbReference type="NCBIfam" id="TIGR00331">
    <property type="entry name" value="hrcA"/>
    <property type="match status" value="1"/>
</dbReference>
<dbReference type="PANTHER" id="PTHR34824">
    <property type="entry name" value="HEAT-INDUCIBLE TRANSCRIPTION REPRESSOR HRCA"/>
    <property type="match status" value="1"/>
</dbReference>
<dbReference type="PANTHER" id="PTHR34824:SF1">
    <property type="entry name" value="HEAT-INDUCIBLE TRANSCRIPTION REPRESSOR HRCA"/>
    <property type="match status" value="1"/>
</dbReference>
<dbReference type="Pfam" id="PF01628">
    <property type="entry name" value="HrcA"/>
    <property type="match status" value="1"/>
</dbReference>
<dbReference type="Pfam" id="PF03444">
    <property type="entry name" value="HrcA_DNA-bdg"/>
    <property type="match status" value="1"/>
</dbReference>
<dbReference type="PIRSF" id="PIRSF005485">
    <property type="entry name" value="HrcA"/>
    <property type="match status" value="1"/>
</dbReference>
<dbReference type="SUPFAM" id="SSF55781">
    <property type="entry name" value="GAF domain-like"/>
    <property type="match status" value="1"/>
</dbReference>
<dbReference type="SUPFAM" id="SSF46785">
    <property type="entry name" value="Winged helix' DNA-binding domain"/>
    <property type="match status" value="1"/>
</dbReference>
<accession>B1IA50</accession>
<keyword id="KW-0678">Repressor</keyword>
<keyword id="KW-0346">Stress response</keyword>
<keyword id="KW-0804">Transcription</keyword>
<keyword id="KW-0805">Transcription regulation</keyword>